<keyword id="KW-0067">ATP-binding</keyword>
<keyword id="KW-0963">Cytoplasm</keyword>
<keyword id="KW-0436">Ligase</keyword>
<keyword id="KW-0547">Nucleotide-binding</keyword>
<keyword id="KW-0819">tRNA processing</keyword>
<name>TILS_CHLAB</name>
<comment type="function">
    <text evidence="1">Ligates lysine onto the cytidine present at position 34 of the AUA codon-specific tRNA(Ile) that contains the anticodon CAU, in an ATP-dependent manner. Cytidine is converted to lysidine, thus changing the amino acid specificity of the tRNA from methionine to isoleucine.</text>
</comment>
<comment type="catalytic activity">
    <reaction evidence="1">
        <text>cytidine(34) in tRNA(Ile2) + L-lysine + ATP = lysidine(34) in tRNA(Ile2) + AMP + diphosphate + H(+)</text>
        <dbReference type="Rhea" id="RHEA:43744"/>
        <dbReference type="Rhea" id="RHEA-COMP:10625"/>
        <dbReference type="Rhea" id="RHEA-COMP:10670"/>
        <dbReference type="ChEBI" id="CHEBI:15378"/>
        <dbReference type="ChEBI" id="CHEBI:30616"/>
        <dbReference type="ChEBI" id="CHEBI:32551"/>
        <dbReference type="ChEBI" id="CHEBI:33019"/>
        <dbReference type="ChEBI" id="CHEBI:82748"/>
        <dbReference type="ChEBI" id="CHEBI:83665"/>
        <dbReference type="ChEBI" id="CHEBI:456215"/>
        <dbReference type="EC" id="6.3.4.19"/>
    </reaction>
</comment>
<comment type="subcellular location">
    <subcellularLocation>
        <location evidence="1">Cytoplasm</location>
    </subcellularLocation>
</comment>
<comment type="domain">
    <text>The N-terminal region contains the highly conserved SGGXDS motif, predicted to be a P-loop motif involved in ATP binding.</text>
</comment>
<comment type="similarity">
    <text evidence="1">Belongs to the tRNA(Ile)-lysidine synthase family.</text>
</comment>
<organism>
    <name type="scientific">Chlamydia abortus (strain DSM 27085 / S26/3)</name>
    <name type="common">Chlamydophila abortus</name>
    <dbReference type="NCBI Taxonomy" id="218497"/>
    <lineage>
        <taxon>Bacteria</taxon>
        <taxon>Pseudomonadati</taxon>
        <taxon>Chlamydiota</taxon>
        <taxon>Chlamydiia</taxon>
        <taxon>Chlamydiales</taxon>
        <taxon>Chlamydiaceae</taxon>
        <taxon>Chlamydia/Chlamydophila group</taxon>
        <taxon>Chlamydia</taxon>
    </lineage>
</organism>
<evidence type="ECO:0000255" key="1">
    <source>
        <dbReference type="HAMAP-Rule" id="MF_01161"/>
    </source>
</evidence>
<accession>Q5L5B2</accession>
<sequence length="317" mass="36747">MLSCLLRNDKRLEVFFSALDMKKSYLLALSGGSDSLFLLYLLKSRGVSFTAVHVDYGWRESSYREAEELKLRCQEEGVPLIVDHVPSKYTTSKDPENTARRYRYALFCKICREDNLAGIFLAHHANDQAETVLKRVLEGASLGNLKGMTSGASYNRIPLLRPLLHIPKQVLMQTLDAENIAYVHDVTNTDERYLRARMRNKIFPWLEEIFAKNITQPLLTLAQDSEELSCYMKQQAQPFLENIRQEHTTWSIEIPKPLIEQVFLAKWVCKEFFYKVGIVVSRHFLQMVYDHLSRNLPAEMRLRDKRVIVKAGVVMIE</sequence>
<proteinExistence type="inferred from homology"/>
<gene>
    <name evidence="1" type="primary">tilS</name>
    <name type="ordered locus">CAB732</name>
</gene>
<protein>
    <recommendedName>
        <fullName evidence="1">tRNA(Ile)-lysidine synthase</fullName>
        <ecNumber evidence="1">6.3.4.19</ecNumber>
    </recommendedName>
    <alternativeName>
        <fullName evidence="1">tRNA(Ile)-2-lysyl-cytidine synthase</fullName>
    </alternativeName>
    <alternativeName>
        <fullName evidence="1">tRNA(Ile)-lysidine synthetase</fullName>
    </alternativeName>
</protein>
<dbReference type="EC" id="6.3.4.19" evidence="1"/>
<dbReference type="EMBL" id="CR848038">
    <property type="protein sequence ID" value="CAH64179.1"/>
    <property type="molecule type" value="Genomic_DNA"/>
</dbReference>
<dbReference type="RefSeq" id="WP_011097299.1">
    <property type="nucleotide sequence ID" value="NC_004552.2"/>
</dbReference>
<dbReference type="SMR" id="Q5L5B2"/>
<dbReference type="KEGG" id="cab:CAB732"/>
<dbReference type="eggNOG" id="COG0037">
    <property type="taxonomic scope" value="Bacteria"/>
</dbReference>
<dbReference type="HOGENOM" id="CLU_870675_0_0_0"/>
<dbReference type="OrthoDB" id="9807403at2"/>
<dbReference type="Proteomes" id="UP000001012">
    <property type="component" value="Chromosome"/>
</dbReference>
<dbReference type="GO" id="GO:0005737">
    <property type="term" value="C:cytoplasm"/>
    <property type="evidence" value="ECO:0007669"/>
    <property type="project" value="UniProtKB-SubCell"/>
</dbReference>
<dbReference type="GO" id="GO:0005524">
    <property type="term" value="F:ATP binding"/>
    <property type="evidence" value="ECO:0007669"/>
    <property type="project" value="UniProtKB-UniRule"/>
</dbReference>
<dbReference type="GO" id="GO:0032267">
    <property type="term" value="F:tRNA(Ile)-lysidine synthase activity"/>
    <property type="evidence" value="ECO:0007669"/>
    <property type="project" value="UniProtKB-EC"/>
</dbReference>
<dbReference type="GO" id="GO:0006400">
    <property type="term" value="P:tRNA modification"/>
    <property type="evidence" value="ECO:0007669"/>
    <property type="project" value="UniProtKB-UniRule"/>
</dbReference>
<dbReference type="CDD" id="cd01992">
    <property type="entry name" value="TilS_N"/>
    <property type="match status" value="1"/>
</dbReference>
<dbReference type="Gene3D" id="3.40.50.620">
    <property type="entry name" value="HUPs"/>
    <property type="match status" value="1"/>
</dbReference>
<dbReference type="HAMAP" id="MF_01161">
    <property type="entry name" value="tRNA_Ile_lys_synt"/>
    <property type="match status" value="1"/>
</dbReference>
<dbReference type="InterPro" id="IPR014729">
    <property type="entry name" value="Rossmann-like_a/b/a_fold"/>
</dbReference>
<dbReference type="InterPro" id="IPR011063">
    <property type="entry name" value="TilS/TtcA_N"/>
</dbReference>
<dbReference type="InterPro" id="IPR012094">
    <property type="entry name" value="tRNA_Ile_lys_synt"/>
</dbReference>
<dbReference type="InterPro" id="IPR012795">
    <property type="entry name" value="tRNA_Ile_lys_synt_N"/>
</dbReference>
<dbReference type="NCBIfam" id="TIGR02432">
    <property type="entry name" value="lysidine_TilS_N"/>
    <property type="match status" value="1"/>
</dbReference>
<dbReference type="PANTHER" id="PTHR43033">
    <property type="entry name" value="TRNA(ILE)-LYSIDINE SYNTHASE-RELATED"/>
    <property type="match status" value="1"/>
</dbReference>
<dbReference type="PANTHER" id="PTHR43033:SF1">
    <property type="entry name" value="TRNA(ILE)-LYSIDINE SYNTHASE-RELATED"/>
    <property type="match status" value="1"/>
</dbReference>
<dbReference type="Pfam" id="PF01171">
    <property type="entry name" value="ATP_bind_3"/>
    <property type="match status" value="1"/>
</dbReference>
<dbReference type="SUPFAM" id="SSF52402">
    <property type="entry name" value="Adenine nucleotide alpha hydrolases-like"/>
    <property type="match status" value="1"/>
</dbReference>
<reference key="1">
    <citation type="journal article" date="2005" name="Genome Res.">
        <title>The Chlamydophila abortus genome sequence reveals an array of variable proteins that contribute to interspecies variation.</title>
        <authorList>
            <person name="Thomson N.R."/>
            <person name="Yeats C."/>
            <person name="Bell K."/>
            <person name="Holden M.T.G."/>
            <person name="Bentley S.D."/>
            <person name="Livingstone M."/>
            <person name="Cerdeno-Tarraga A.-M."/>
            <person name="Harris B."/>
            <person name="Doggett J."/>
            <person name="Ormond D."/>
            <person name="Mungall K."/>
            <person name="Clarke K."/>
            <person name="Feltwell T."/>
            <person name="Hance Z."/>
            <person name="Sanders M."/>
            <person name="Quail M.A."/>
            <person name="Price C."/>
            <person name="Barrell B.G."/>
            <person name="Parkhill J."/>
            <person name="Longbottom D."/>
        </authorList>
    </citation>
    <scope>NUCLEOTIDE SEQUENCE [LARGE SCALE GENOMIC DNA]</scope>
    <source>
        <strain>DSM 27085 / S26/3</strain>
    </source>
</reference>
<feature type="chain" id="PRO_1000213705" description="tRNA(Ile)-lysidine synthase">
    <location>
        <begin position="1"/>
        <end position="317"/>
    </location>
</feature>
<feature type="binding site" evidence="1">
    <location>
        <begin position="30"/>
        <end position="35"/>
    </location>
    <ligand>
        <name>ATP</name>
        <dbReference type="ChEBI" id="CHEBI:30616"/>
    </ligand>
</feature>